<dbReference type="EC" id="6.3.2.6" evidence="1"/>
<dbReference type="EMBL" id="CP000746">
    <property type="protein sequence ID" value="ABR74351.1"/>
    <property type="molecule type" value="Genomic_DNA"/>
</dbReference>
<dbReference type="RefSeq" id="WP_012072728.1">
    <property type="nucleotide sequence ID" value="NC_009655.1"/>
</dbReference>
<dbReference type="SMR" id="A6VN04"/>
<dbReference type="STRING" id="339671.Asuc_0983"/>
<dbReference type="KEGG" id="asu:Asuc_0983"/>
<dbReference type="eggNOG" id="COG0152">
    <property type="taxonomic scope" value="Bacteria"/>
</dbReference>
<dbReference type="HOGENOM" id="CLU_045637_0_2_6"/>
<dbReference type="OrthoDB" id="9801549at2"/>
<dbReference type="UniPathway" id="UPA00074">
    <property type="reaction ID" value="UER00131"/>
</dbReference>
<dbReference type="Proteomes" id="UP000001114">
    <property type="component" value="Chromosome"/>
</dbReference>
<dbReference type="GO" id="GO:0005737">
    <property type="term" value="C:cytoplasm"/>
    <property type="evidence" value="ECO:0007669"/>
    <property type="project" value="TreeGrafter"/>
</dbReference>
<dbReference type="GO" id="GO:0005524">
    <property type="term" value="F:ATP binding"/>
    <property type="evidence" value="ECO:0007669"/>
    <property type="project" value="UniProtKB-KW"/>
</dbReference>
<dbReference type="GO" id="GO:0004639">
    <property type="term" value="F:phosphoribosylaminoimidazolesuccinocarboxamide synthase activity"/>
    <property type="evidence" value="ECO:0007669"/>
    <property type="project" value="UniProtKB-UniRule"/>
</dbReference>
<dbReference type="GO" id="GO:0006189">
    <property type="term" value="P:'de novo' IMP biosynthetic process"/>
    <property type="evidence" value="ECO:0007669"/>
    <property type="project" value="UniProtKB-UniRule"/>
</dbReference>
<dbReference type="CDD" id="cd01414">
    <property type="entry name" value="SAICAR_synt_Sc"/>
    <property type="match status" value="1"/>
</dbReference>
<dbReference type="FunFam" id="3.30.200.20:FF:000365">
    <property type="entry name" value="Phosphoribosylaminoimidazole-succinocarboxamide synthase"/>
    <property type="match status" value="1"/>
</dbReference>
<dbReference type="FunFam" id="3.30.470.20:FF:000015">
    <property type="entry name" value="Phosphoribosylaminoimidazole-succinocarboxamide synthase"/>
    <property type="match status" value="1"/>
</dbReference>
<dbReference type="Gene3D" id="3.30.470.20">
    <property type="entry name" value="ATP-grasp fold, B domain"/>
    <property type="match status" value="1"/>
</dbReference>
<dbReference type="Gene3D" id="3.30.200.20">
    <property type="entry name" value="Phosphorylase Kinase, domain 1"/>
    <property type="match status" value="1"/>
</dbReference>
<dbReference type="HAMAP" id="MF_00137">
    <property type="entry name" value="SAICAR_synth"/>
    <property type="match status" value="1"/>
</dbReference>
<dbReference type="InterPro" id="IPR028923">
    <property type="entry name" value="SAICAR_synt/ADE2_N"/>
</dbReference>
<dbReference type="InterPro" id="IPR001636">
    <property type="entry name" value="SAICAR_synth"/>
</dbReference>
<dbReference type="InterPro" id="IPR018236">
    <property type="entry name" value="SAICAR_synthetase_CS"/>
</dbReference>
<dbReference type="NCBIfam" id="NF010568">
    <property type="entry name" value="PRK13961.1"/>
    <property type="match status" value="1"/>
</dbReference>
<dbReference type="NCBIfam" id="TIGR00081">
    <property type="entry name" value="purC"/>
    <property type="match status" value="1"/>
</dbReference>
<dbReference type="PANTHER" id="PTHR43700">
    <property type="entry name" value="PHOSPHORIBOSYLAMINOIMIDAZOLE-SUCCINOCARBOXAMIDE SYNTHASE"/>
    <property type="match status" value="1"/>
</dbReference>
<dbReference type="PANTHER" id="PTHR43700:SF1">
    <property type="entry name" value="PHOSPHORIBOSYLAMINOIMIDAZOLE-SUCCINOCARBOXAMIDE SYNTHASE"/>
    <property type="match status" value="1"/>
</dbReference>
<dbReference type="Pfam" id="PF01259">
    <property type="entry name" value="SAICAR_synt"/>
    <property type="match status" value="1"/>
</dbReference>
<dbReference type="SUPFAM" id="SSF56104">
    <property type="entry name" value="SAICAR synthase-like"/>
    <property type="match status" value="1"/>
</dbReference>
<dbReference type="PROSITE" id="PS01057">
    <property type="entry name" value="SAICAR_SYNTHETASE_1"/>
    <property type="match status" value="1"/>
</dbReference>
<dbReference type="PROSITE" id="PS01058">
    <property type="entry name" value="SAICAR_SYNTHETASE_2"/>
    <property type="match status" value="1"/>
</dbReference>
<proteinExistence type="inferred from homology"/>
<name>PUR7_ACTSZ</name>
<comment type="catalytic activity">
    <reaction evidence="1">
        <text>5-amino-1-(5-phospho-D-ribosyl)imidazole-4-carboxylate + L-aspartate + ATP = (2S)-2-[5-amino-1-(5-phospho-beta-D-ribosyl)imidazole-4-carboxamido]succinate + ADP + phosphate + 2 H(+)</text>
        <dbReference type="Rhea" id="RHEA:22628"/>
        <dbReference type="ChEBI" id="CHEBI:15378"/>
        <dbReference type="ChEBI" id="CHEBI:29991"/>
        <dbReference type="ChEBI" id="CHEBI:30616"/>
        <dbReference type="ChEBI" id="CHEBI:43474"/>
        <dbReference type="ChEBI" id="CHEBI:58443"/>
        <dbReference type="ChEBI" id="CHEBI:77657"/>
        <dbReference type="ChEBI" id="CHEBI:456216"/>
        <dbReference type="EC" id="6.3.2.6"/>
    </reaction>
</comment>
<comment type="pathway">
    <text evidence="1">Purine metabolism; IMP biosynthesis via de novo pathway; 5-amino-1-(5-phospho-D-ribosyl)imidazole-4-carboxamide from 5-amino-1-(5-phospho-D-ribosyl)imidazole-4-carboxylate: step 1/2.</text>
</comment>
<comment type="similarity">
    <text evidence="1">Belongs to the SAICAR synthetase family.</text>
</comment>
<protein>
    <recommendedName>
        <fullName evidence="1">Phosphoribosylaminoimidazole-succinocarboxamide synthase</fullName>
        <ecNumber evidence="1">6.3.2.6</ecNumber>
    </recommendedName>
    <alternativeName>
        <fullName evidence="1">SAICAR synthetase</fullName>
    </alternativeName>
</protein>
<reference key="1">
    <citation type="journal article" date="2010" name="BMC Genomics">
        <title>A genomic perspective on the potential of Actinobacillus succinogenes for industrial succinate production.</title>
        <authorList>
            <person name="McKinlay J.B."/>
            <person name="Laivenieks M."/>
            <person name="Schindler B.D."/>
            <person name="McKinlay A.A."/>
            <person name="Siddaramappa S."/>
            <person name="Challacombe J.F."/>
            <person name="Lowry S.R."/>
            <person name="Clum A."/>
            <person name="Lapidus A.L."/>
            <person name="Burkhart K.B."/>
            <person name="Harkins V."/>
            <person name="Vieille C."/>
        </authorList>
    </citation>
    <scope>NUCLEOTIDE SEQUENCE [LARGE SCALE GENOMIC DNA]</scope>
    <source>
        <strain>ATCC 55618 / DSM 22257 / CCUG 43843 / 130Z</strain>
    </source>
</reference>
<keyword id="KW-0067">ATP-binding</keyword>
<keyword id="KW-0436">Ligase</keyword>
<keyword id="KW-0547">Nucleotide-binding</keyword>
<keyword id="KW-0658">Purine biosynthesis</keyword>
<keyword id="KW-1185">Reference proteome</keyword>
<sequence>MAELSLKKIYSGKVRDLYEIDDKRMLMVASDRLSAFDVILDDPIPHKGEILTQISNFWFKKLAHIMPNHFTGDSVYDVLPKAEADLLKDRAVVVKRLKPIKIESIVRGYLTGSGLKDYQQTGTICGLELPKGLVEAGKLPEPIFTPSSKEEVGDHDINISYAECERLIGKELAAQVRDAAIALYKEAAAYALTKGIIICDTKFEFGLDENGTLTLMDEVLTPDSSRFWSVDTYKEGTNPPSFDKQFVRDWLEQSGWNKQPPAPKVPAEVIEKTVAKYQEALDLLTK</sequence>
<gene>
    <name evidence="1" type="primary">purC</name>
    <name type="ordered locus">Asuc_0983</name>
</gene>
<feature type="chain" id="PRO_1000071444" description="Phosphoribosylaminoimidazole-succinocarboxamide synthase">
    <location>
        <begin position="1"/>
        <end position="286"/>
    </location>
</feature>
<accession>A6VN04</accession>
<organism>
    <name type="scientific">Actinobacillus succinogenes (strain ATCC 55618 / DSM 22257 / CCUG 43843 / 130Z)</name>
    <dbReference type="NCBI Taxonomy" id="339671"/>
    <lineage>
        <taxon>Bacteria</taxon>
        <taxon>Pseudomonadati</taxon>
        <taxon>Pseudomonadota</taxon>
        <taxon>Gammaproteobacteria</taxon>
        <taxon>Pasteurellales</taxon>
        <taxon>Pasteurellaceae</taxon>
        <taxon>Actinobacillus</taxon>
    </lineage>
</organism>
<evidence type="ECO:0000255" key="1">
    <source>
        <dbReference type="HAMAP-Rule" id="MF_00137"/>
    </source>
</evidence>